<feature type="chain" id="PRO_0000449858" description="ABC transporter ALT5">
    <location>
        <begin position="1"/>
        <end position="1576"/>
    </location>
</feature>
<feature type="transmembrane region" description="Helical" evidence="2">
    <location>
        <begin position="27"/>
        <end position="47"/>
    </location>
</feature>
<feature type="transmembrane region" description="Helical" evidence="2">
    <location>
        <begin position="72"/>
        <end position="92"/>
    </location>
</feature>
<feature type="transmembrane region" description="Helical" evidence="2">
    <location>
        <begin position="99"/>
        <end position="119"/>
    </location>
</feature>
<feature type="transmembrane region" description="Helical" evidence="2">
    <location>
        <begin position="267"/>
        <end position="287"/>
    </location>
</feature>
<feature type="transmembrane region" description="Helical" evidence="2 4">
    <location>
        <begin position="289"/>
        <end position="309"/>
    </location>
</feature>
<feature type="transmembrane region" description="Helical" evidence="2 4">
    <location>
        <begin position="321"/>
        <end position="341"/>
    </location>
</feature>
<feature type="transmembrane region" description="Helical" evidence="2 4">
    <location>
        <begin position="387"/>
        <end position="407"/>
    </location>
</feature>
<feature type="transmembrane region" description="Helical" evidence="2 4">
    <location>
        <begin position="417"/>
        <end position="437"/>
    </location>
</feature>
<feature type="transmembrane region" description="Helical" evidence="2 4">
    <location>
        <begin position="500"/>
        <end position="520"/>
    </location>
</feature>
<feature type="transmembrane region" description="Helical" evidence="2 4">
    <location>
        <begin position="525"/>
        <end position="545"/>
    </location>
</feature>
<feature type="transmembrane region" description="Helical" evidence="2 4">
    <location>
        <begin position="915"/>
        <end position="935"/>
    </location>
</feature>
<feature type="transmembrane region" description="Helical" evidence="2 4">
    <location>
        <begin position="957"/>
        <end position="977"/>
    </location>
</feature>
<feature type="transmembrane region" description="Helical" evidence="2 4">
    <location>
        <begin position="981"/>
        <end position="1001"/>
    </location>
</feature>
<feature type="transmembrane region" description="Helical" evidence="2 4">
    <location>
        <begin position="1035"/>
        <end position="1054"/>
    </location>
</feature>
<feature type="transmembrane region" description="Helical" evidence="2 4">
    <location>
        <begin position="1060"/>
        <end position="1078"/>
    </location>
</feature>
<feature type="transmembrane region" description="Helical" evidence="2 4">
    <location>
        <begin position="1142"/>
        <end position="1162"/>
    </location>
</feature>
<feature type="transmembrane region" description="Helical" evidence="2 4">
    <location>
        <begin position="1171"/>
        <end position="1191"/>
    </location>
</feature>
<feature type="domain" description="ABC transmembrane type-1 1" evidence="4">
    <location>
        <begin position="289"/>
        <end position="556"/>
    </location>
</feature>
<feature type="domain" description="ABC transporter 1" evidence="3">
    <location>
        <begin position="602"/>
        <end position="834"/>
    </location>
</feature>
<feature type="domain" description="ABC transmembrane type-1 2" evidence="4">
    <location>
        <begin position="919"/>
        <end position="1199"/>
    </location>
</feature>
<feature type="domain" description="ABC transporter 2" evidence="3">
    <location>
        <begin position="1236"/>
        <end position="1567"/>
    </location>
</feature>
<feature type="binding site" evidence="3">
    <location>
        <begin position="636"/>
        <end position="643"/>
    </location>
    <ligand>
        <name>ATP</name>
        <dbReference type="ChEBI" id="CHEBI:30616"/>
    </ligand>
</feature>
<feature type="binding site" evidence="3">
    <location>
        <begin position="1278"/>
        <end position="1285"/>
    </location>
    <ligand>
        <name>ATP</name>
        <dbReference type="ChEBI" id="CHEBI:30616"/>
    </ligand>
</feature>
<sequence length="1576" mass="173102">MDFAKCIGDEFFGPVVDGCRGGFDFTLKFELLFFATIPPAIFLILAVPRIASLYSEPTIVAWRSWLYASKQILGFVNLVLQVTLLVMTTQGTAQFKLSGLFLSARIVTTSSTLLSVIVCHYEHSRCRRPSTILDVYLGLTLFLDIAHNRTLWLSVSSSLDAIFVRFHTTTVACKAVLAILESLSKKRLFVLHNRTTQSLDGTRGSYSLSTFSWLSRLLLSGYQNPLRLDSLPLLDEAMAVETLYARFLENTKGYLGESSGSDQKSRLPLSQALAKTLLLPLLLPILPRLVLIGLSISQAFLIQAVTGFLSAKNKADEVGYGLIGATILIYVGIALSTSLYWYYHQRFLYMARSCLTSGIFRKTTELSEATLAESQAITLMSTDIERVLAGFLNLHELWASLIQAVIVSWILWTRLKGFFALPVGLTVACFVALATVGRYIGGFQKTWMQETQKRVAMIASVLASMKQVKVSGLAATIDKKVQQARKTELRASHGVRMLQITAMTLSLLPELIAPVITLAATSESVATSNIFTIVALISLLTAPLGQLFQSVAPLMSGLACLDRIQTYLELEPVRERRGHNKSRLERIVDGPASSDEDYSYAFRVVNGSFRWQKDSPHCLQNVNLTVKHAAFTMIVGPVGSGKSTLCKALLGEISLSAGRVLVGKESEGKIAYCGQTPFLSNSTIRDNIVHFSQWNTSRYIEVIEASGLSYHLARLPDGHDTLVGSNGLLLSGGQRQLIAIARALYSDAHTLIFDDVLSGLDARTEDHVFRHIFGPSGLLRKRHDRPAVILCTQSVMYLPLADHIIVLSEQGDIAEQGKWEVLNSNGGYLQSLCVRDADATTPKVELGVEGESERNHWHTTESDEMRTKETLEQQLVVSENDEATVSGPASSGPSHVVAWSGGLANYRYYLKAVSVVALVAFLASAICYGFFFAFPTLWLNFWVRDATSKHRSHTNAFWVGIYGLFHALSLLGGFLTMYLAVTSISLVSGASLHSSIFAAIMRAPLSLFRTIDQGTLTNYFSQDITLVDGELPRSLIQFVCDLAISLSMAGVLAASSPYLAAMYPIAIALMYATVKLYLRTSRQLRILALEAKSPLYMHFLDVGRGIATLRAARLLKQYENQNDQLLEISQRPAYLLAMVQYWLLFILNIIVMFLAIFVVTLVTQLRNHGTGFAGSGLVMLLQFGQILASAMQSYAKLETSMGAVHRLKSLFEHVVSDTVGEKGISPPLSWPSKGYIKLDGVSASYMSTNEETDNTLGGLALRNIRLVVEPGQHVAICGRSGSGKSSLVLLLLGLLEPLQSTGCDAITIDGLDIRTIKQAVLSERIIAVSQDTIFLPAGASWQENLDLLGTCTTSEVKSVLENMNLWSLIESQDGGLTAAMKPEELSSGQKQLFSVARAVLRKRVKDREIRQASSIEIPSTSQLRLASDAQECKKTESDCEAVEGDSDLYCLPQLEPSNDTRLAAGREDVLGGVLLLDEFNSSMDLLTEQRYFNRIQSEFPGYTIIAITHSLASFIKDQECRQEGEAQVYRGGFFDRIIVLDSGMIVEDGHPTTLLETSHSKFRALCEAAARGEVST</sequence>
<dbReference type="EMBL" id="AB969680">
    <property type="protein sequence ID" value="BBG74265.1"/>
    <property type="molecule type" value="Genomic_DNA"/>
</dbReference>
<dbReference type="SMR" id="A0A3G9H9H1"/>
<dbReference type="VEuPathDB" id="FungiDB:CC77DRAFT_364501"/>
<dbReference type="GO" id="GO:0005886">
    <property type="term" value="C:plasma membrane"/>
    <property type="evidence" value="ECO:0007669"/>
    <property type="project" value="UniProtKB-SubCell"/>
</dbReference>
<dbReference type="GO" id="GO:0140359">
    <property type="term" value="F:ABC-type transporter activity"/>
    <property type="evidence" value="ECO:0007669"/>
    <property type="project" value="InterPro"/>
</dbReference>
<dbReference type="GO" id="GO:0005524">
    <property type="term" value="F:ATP binding"/>
    <property type="evidence" value="ECO:0007669"/>
    <property type="project" value="UniProtKB-KW"/>
</dbReference>
<dbReference type="GO" id="GO:0016887">
    <property type="term" value="F:ATP hydrolysis activity"/>
    <property type="evidence" value="ECO:0007669"/>
    <property type="project" value="InterPro"/>
</dbReference>
<dbReference type="CDD" id="cd18579">
    <property type="entry name" value="ABC_6TM_ABCC_D1"/>
    <property type="match status" value="1"/>
</dbReference>
<dbReference type="CDD" id="cd18580">
    <property type="entry name" value="ABC_6TM_ABCC_D2"/>
    <property type="match status" value="1"/>
</dbReference>
<dbReference type="FunFam" id="1.20.1560.10:FF:000055">
    <property type="entry name" value="ABC multidrug transporter (Eurofung)"/>
    <property type="match status" value="1"/>
</dbReference>
<dbReference type="Gene3D" id="1.20.1560.10">
    <property type="entry name" value="ABC transporter type 1, transmembrane domain"/>
    <property type="match status" value="2"/>
</dbReference>
<dbReference type="Gene3D" id="3.40.50.300">
    <property type="entry name" value="P-loop containing nucleotide triphosphate hydrolases"/>
    <property type="match status" value="2"/>
</dbReference>
<dbReference type="InterPro" id="IPR003593">
    <property type="entry name" value="AAA+_ATPase"/>
</dbReference>
<dbReference type="InterPro" id="IPR011527">
    <property type="entry name" value="ABC1_TM_dom"/>
</dbReference>
<dbReference type="InterPro" id="IPR036640">
    <property type="entry name" value="ABC1_TM_sf"/>
</dbReference>
<dbReference type="InterPro" id="IPR003439">
    <property type="entry name" value="ABC_transporter-like_ATP-bd"/>
</dbReference>
<dbReference type="InterPro" id="IPR017871">
    <property type="entry name" value="ABC_transporter-like_CS"/>
</dbReference>
<dbReference type="InterPro" id="IPR050173">
    <property type="entry name" value="ABC_transporter_C-like"/>
</dbReference>
<dbReference type="InterPro" id="IPR044746">
    <property type="entry name" value="ABCC_6TM_D1"/>
</dbReference>
<dbReference type="InterPro" id="IPR044726">
    <property type="entry name" value="ABCC_6TM_D2"/>
</dbReference>
<dbReference type="InterPro" id="IPR027417">
    <property type="entry name" value="P-loop_NTPase"/>
</dbReference>
<dbReference type="InterPro" id="IPR056227">
    <property type="entry name" value="TMD0_ABC"/>
</dbReference>
<dbReference type="PANTHER" id="PTHR24223:SF345">
    <property type="entry name" value="ABC MULTIDRUG TRANSPORTER (EUROFUNG)"/>
    <property type="match status" value="1"/>
</dbReference>
<dbReference type="PANTHER" id="PTHR24223">
    <property type="entry name" value="ATP-BINDING CASSETTE SUB-FAMILY C"/>
    <property type="match status" value="1"/>
</dbReference>
<dbReference type="Pfam" id="PF00664">
    <property type="entry name" value="ABC_membrane"/>
    <property type="match status" value="1"/>
</dbReference>
<dbReference type="Pfam" id="PF00005">
    <property type="entry name" value="ABC_tran"/>
    <property type="match status" value="2"/>
</dbReference>
<dbReference type="Pfam" id="PF24357">
    <property type="entry name" value="TMD0_ABC"/>
    <property type="match status" value="1"/>
</dbReference>
<dbReference type="SMART" id="SM00382">
    <property type="entry name" value="AAA"/>
    <property type="match status" value="2"/>
</dbReference>
<dbReference type="SUPFAM" id="SSF90123">
    <property type="entry name" value="ABC transporter transmembrane region"/>
    <property type="match status" value="2"/>
</dbReference>
<dbReference type="SUPFAM" id="SSF52540">
    <property type="entry name" value="P-loop containing nucleoside triphosphate hydrolases"/>
    <property type="match status" value="2"/>
</dbReference>
<dbReference type="PROSITE" id="PS50929">
    <property type="entry name" value="ABC_TM1F"/>
    <property type="match status" value="2"/>
</dbReference>
<dbReference type="PROSITE" id="PS00211">
    <property type="entry name" value="ABC_TRANSPORTER_1"/>
    <property type="match status" value="2"/>
</dbReference>
<dbReference type="PROSITE" id="PS50893">
    <property type="entry name" value="ABC_TRANSPORTER_2"/>
    <property type="match status" value="2"/>
</dbReference>
<name>ALT5_ALTAL</name>
<organism>
    <name type="scientific">Alternaria alternata</name>
    <name type="common">Alternaria rot fungus</name>
    <name type="synonym">Torula alternata</name>
    <dbReference type="NCBI Taxonomy" id="5599"/>
    <lineage>
        <taxon>Eukaryota</taxon>
        <taxon>Fungi</taxon>
        <taxon>Dikarya</taxon>
        <taxon>Ascomycota</taxon>
        <taxon>Pezizomycotina</taxon>
        <taxon>Dothideomycetes</taxon>
        <taxon>Pleosporomycetidae</taxon>
        <taxon>Pleosporales</taxon>
        <taxon>Pleosporineae</taxon>
        <taxon>Pleosporaceae</taxon>
        <taxon>Alternaria</taxon>
        <taxon>Alternaria sect. Alternaria</taxon>
        <taxon>Alternaria alternata complex</taxon>
    </lineage>
</organism>
<gene>
    <name evidence="6" type="primary">ALT5</name>
</gene>
<proteinExistence type="inferred from homology"/>
<protein>
    <recommendedName>
        <fullName evidence="1">ABC transporter ALT5</fullName>
    </recommendedName>
    <alternativeName>
        <fullName evidence="6">AAL-toxin biosynthesis cluster protein 5</fullName>
    </alternativeName>
</protein>
<accession>A0A3G9H9H1</accession>
<evidence type="ECO:0000250" key="1">
    <source>
        <dbReference type="UniProtKB" id="Q8J2Q1"/>
    </source>
</evidence>
<evidence type="ECO:0000255" key="2"/>
<evidence type="ECO:0000255" key="3">
    <source>
        <dbReference type="PROSITE-ProRule" id="PRU00434"/>
    </source>
</evidence>
<evidence type="ECO:0000255" key="4">
    <source>
        <dbReference type="PROSITE-ProRule" id="PRU00441"/>
    </source>
</evidence>
<evidence type="ECO:0000269" key="5">
    <source>
    </source>
</evidence>
<evidence type="ECO:0000303" key="6">
    <source ref="1"/>
</evidence>
<evidence type="ECO:0000305" key="7"/>
<evidence type="ECO:0000305" key="8">
    <source>
    </source>
</evidence>
<keyword id="KW-0067">ATP-binding</keyword>
<keyword id="KW-1003">Cell membrane</keyword>
<keyword id="KW-0472">Membrane</keyword>
<keyword id="KW-0547">Nucleotide-binding</keyword>
<keyword id="KW-0812">Transmembrane</keyword>
<keyword id="KW-1133">Transmembrane helix</keyword>
<keyword id="KW-0813">Transport</keyword>
<reference key="1">
    <citation type="submission" date="2014-06" db="EMBL/GenBank/DDBJ databases">
        <title>AAL-toxin biosynthetic genes cluster in the tomato pathotype of Alternaria alternata.</title>
        <authorList>
            <person name="Akagi Y."/>
            <person name="Akamatsu H."/>
            <person name="Takao K."/>
            <person name="Tsuge T."/>
            <person name="Kodama M."/>
        </authorList>
    </citation>
    <scope>NUCLEOTIDE SEQUENCE [GENOMIC DNA]</scope>
    <source>
        <strain>As-27</strain>
    </source>
</reference>
<reference key="2">
    <citation type="journal article" date="2009" name="Eukaryot. Cell">
        <title>Horizontal chromosome transfer, a mechanism for the evolution and differentiation of a plant-pathogenic fungus.</title>
        <authorList>
            <person name="Akagi Y."/>
            <person name="Akamatsu H."/>
            <person name="Otani H."/>
            <person name="Kodama M."/>
        </authorList>
    </citation>
    <scope>FUNCTION</scope>
</reference>
<comment type="function">
    <text evidence="1 8">ABC transporter that may provide the dual role AAL-toxin export and self-protection by allowing the fungus to evade the harmful effect of its own AAL-toxin production.</text>
</comment>
<comment type="subcellular location">
    <subcellularLocation>
        <location evidence="7">Cell membrane</location>
        <topology evidence="2">Multi-pass membrane protein</topology>
    </subcellularLocation>
</comment>
<comment type="miscellaneous">
    <text evidence="5">Gene clusters encoding host-selective toxins (HSTs) are localized on conditionally dispensable chromosomes (CDCs), also called supernumerary chromosomes, where they are present in multiple copies. The CDCs are not essential for saprophytic growth but controls host-selective pathogenicity.</text>
</comment>
<comment type="similarity">
    <text evidence="7">Belongs to the ABC transporter superfamily. ABCC family. Conjugate transporter (TC 3.A.1.208) subfamily.</text>
</comment>